<evidence type="ECO:0000255" key="1">
    <source>
        <dbReference type="HAMAP-Rule" id="MF_00097"/>
    </source>
</evidence>
<dbReference type="EC" id="2.5.1.3" evidence="1"/>
<dbReference type="EMBL" id="AP009240">
    <property type="protein sequence ID" value="BAG79805.1"/>
    <property type="molecule type" value="Genomic_DNA"/>
</dbReference>
<dbReference type="RefSeq" id="WP_000284600.1">
    <property type="nucleotide sequence ID" value="NC_011415.1"/>
</dbReference>
<dbReference type="SMR" id="B6I5K4"/>
<dbReference type="KEGG" id="ecy:ECSE_4281"/>
<dbReference type="HOGENOM" id="CLU_018272_3_3_6"/>
<dbReference type="UniPathway" id="UPA00060">
    <property type="reaction ID" value="UER00141"/>
</dbReference>
<dbReference type="Proteomes" id="UP000008199">
    <property type="component" value="Chromosome"/>
</dbReference>
<dbReference type="GO" id="GO:0005737">
    <property type="term" value="C:cytoplasm"/>
    <property type="evidence" value="ECO:0007669"/>
    <property type="project" value="TreeGrafter"/>
</dbReference>
<dbReference type="GO" id="GO:0000287">
    <property type="term" value="F:magnesium ion binding"/>
    <property type="evidence" value="ECO:0007669"/>
    <property type="project" value="UniProtKB-UniRule"/>
</dbReference>
<dbReference type="GO" id="GO:0004789">
    <property type="term" value="F:thiamine-phosphate diphosphorylase activity"/>
    <property type="evidence" value="ECO:0007669"/>
    <property type="project" value="UniProtKB-UniRule"/>
</dbReference>
<dbReference type="GO" id="GO:0009228">
    <property type="term" value="P:thiamine biosynthetic process"/>
    <property type="evidence" value="ECO:0007669"/>
    <property type="project" value="UniProtKB-KW"/>
</dbReference>
<dbReference type="GO" id="GO:0009229">
    <property type="term" value="P:thiamine diphosphate biosynthetic process"/>
    <property type="evidence" value="ECO:0007669"/>
    <property type="project" value="UniProtKB-UniRule"/>
</dbReference>
<dbReference type="CDD" id="cd00564">
    <property type="entry name" value="TMP_TenI"/>
    <property type="match status" value="1"/>
</dbReference>
<dbReference type="FunFam" id="3.20.20.70:FF:000064">
    <property type="entry name" value="Thiamine-phosphate synthase"/>
    <property type="match status" value="1"/>
</dbReference>
<dbReference type="Gene3D" id="3.20.20.70">
    <property type="entry name" value="Aldolase class I"/>
    <property type="match status" value="1"/>
</dbReference>
<dbReference type="HAMAP" id="MF_00097">
    <property type="entry name" value="TMP_synthase"/>
    <property type="match status" value="1"/>
</dbReference>
<dbReference type="InterPro" id="IPR013785">
    <property type="entry name" value="Aldolase_TIM"/>
</dbReference>
<dbReference type="InterPro" id="IPR036206">
    <property type="entry name" value="ThiamineP_synth_sf"/>
</dbReference>
<dbReference type="InterPro" id="IPR022998">
    <property type="entry name" value="ThiamineP_synth_TenI"/>
</dbReference>
<dbReference type="InterPro" id="IPR034291">
    <property type="entry name" value="TMP_synthase"/>
</dbReference>
<dbReference type="NCBIfam" id="NF002904">
    <property type="entry name" value="PRK03512.1"/>
    <property type="match status" value="1"/>
</dbReference>
<dbReference type="NCBIfam" id="TIGR00693">
    <property type="entry name" value="thiE"/>
    <property type="match status" value="1"/>
</dbReference>
<dbReference type="PANTHER" id="PTHR20857">
    <property type="entry name" value="THIAMINE-PHOSPHATE PYROPHOSPHORYLASE"/>
    <property type="match status" value="1"/>
</dbReference>
<dbReference type="PANTHER" id="PTHR20857:SF15">
    <property type="entry name" value="THIAMINE-PHOSPHATE SYNTHASE"/>
    <property type="match status" value="1"/>
</dbReference>
<dbReference type="Pfam" id="PF02581">
    <property type="entry name" value="TMP-TENI"/>
    <property type="match status" value="1"/>
</dbReference>
<dbReference type="SUPFAM" id="SSF51391">
    <property type="entry name" value="Thiamin phosphate synthase"/>
    <property type="match status" value="1"/>
</dbReference>
<protein>
    <recommendedName>
        <fullName evidence="1">Thiamine-phosphate synthase</fullName>
        <shortName evidence="1">TP synthase</shortName>
        <shortName evidence="1">TPS</shortName>
        <ecNumber evidence="1">2.5.1.3</ecNumber>
    </recommendedName>
    <alternativeName>
        <fullName evidence="1">Thiamine-phosphate pyrophosphorylase</fullName>
        <shortName evidence="1">TMP pyrophosphorylase</shortName>
        <shortName evidence="1">TMP-PPase</shortName>
    </alternativeName>
</protein>
<accession>B6I5K4</accession>
<sequence>MYQPDFPPVPFRLGLYPVVDSVQWIERLLDAGVRTLQLRIKDRRDEEVEADVVAAIALGRRYNARLFINDYWRLAIKHQAYGVHLGQEDLQATDLNAIRAAGLRLGVSTHDDMEIDVALAARPSYIALGHVFPTQTKQMPSAPQGLEQLARHVERLADYPTVAIGGISLARAPAVIATGVGSIAVVSAITQAADWRLATAQLLEIAGVGDE</sequence>
<gene>
    <name evidence="1" type="primary">thiE</name>
    <name type="ordered locus">ECSE_4281</name>
</gene>
<name>THIE_ECOSE</name>
<reference key="1">
    <citation type="journal article" date="2008" name="DNA Res.">
        <title>Complete genome sequence and comparative analysis of the wild-type commensal Escherichia coli strain SE11 isolated from a healthy adult.</title>
        <authorList>
            <person name="Oshima K."/>
            <person name="Toh H."/>
            <person name="Ogura Y."/>
            <person name="Sasamoto H."/>
            <person name="Morita H."/>
            <person name="Park S.-H."/>
            <person name="Ooka T."/>
            <person name="Iyoda S."/>
            <person name="Taylor T.D."/>
            <person name="Hayashi T."/>
            <person name="Itoh K."/>
            <person name="Hattori M."/>
        </authorList>
    </citation>
    <scope>NUCLEOTIDE SEQUENCE [LARGE SCALE GENOMIC DNA]</scope>
    <source>
        <strain>SE11</strain>
    </source>
</reference>
<proteinExistence type="inferred from homology"/>
<keyword id="KW-0460">Magnesium</keyword>
<keyword id="KW-0479">Metal-binding</keyword>
<keyword id="KW-0784">Thiamine biosynthesis</keyword>
<keyword id="KW-0808">Transferase</keyword>
<comment type="function">
    <text evidence="1">Condenses 4-methyl-5-(beta-hydroxyethyl)thiazole monophosphate (THZ-P) and 2-methyl-4-amino-5-hydroxymethyl pyrimidine pyrophosphate (HMP-PP) to form thiamine monophosphate (TMP).</text>
</comment>
<comment type="catalytic activity">
    <reaction evidence="1">
        <text>2-[(2R,5Z)-2-carboxy-4-methylthiazol-5(2H)-ylidene]ethyl phosphate + 4-amino-2-methyl-5-(diphosphooxymethyl)pyrimidine + 2 H(+) = thiamine phosphate + CO2 + diphosphate</text>
        <dbReference type="Rhea" id="RHEA:47844"/>
        <dbReference type="ChEBI" id="CHEBI:15378"/>
        <dbReference type="ChEBI" id="CHEBI:16526"/>
        <dbReference type="ChEBI" id="CHEBI:33019"/>
        <dbReference type="ChEBI" id="CHEBI:37575"/>
        <dbReference type="ChEBI" id="CHEBI:57841"/>
        <dbReference type="ChEBI" id="CHEBI:62899"/>
        <dbReference type="EC" id="2.5.1.3"/>
    </reaction>
</comment>
<comment type="catalytic activity">
    <reaction evidence="1">
        <text>2-(2-carboxy-4-methylthiazol-5-yl)ethyl phosphate + 4-amino-2-methyl-5-(diphosphooxymethyl)pyrimidine + 2 H(+) = thiamine phosphate + CO2 + diphosphate</text>
        <dbReference type="Rhea" id="RHEA:47848"/>
        <dbReference type="ChEBI" id="CHEBI:15378"/>
        <dbReference type="ChEBI" id="CHEBI:16526"/>
        <dbReference type="ChEBI" id="CHEBI:33019"/>
        <dbReference type="ChEBI" id="CHEBI:37575"/>
        <dbReference type="ChEBI" id="CHEBI:57841"/>
        <dbReference type="ChEBI" id="CHEBI:62890"/>
        <dbReference type="EC" id="2.5.1.3"/>
    </reaction>
</comment>
<comment type="catalytic activity">
    <reaction evidence="1">
        <text>4-methyl-5-(2-phosphooxyethyl)-thiazole + 4-amino-2-methyl-5-(diphosphooxymethyl)pyrimidine + H(+) = thiamine phosphate + diphosphate</text>
        <dbReference type="Rhea" id="RHEA:22328"/>
        <dbReference type="ChEBI" id="CHEBI:15378"/>
        <dbReference type="ChEBI" id="CHEBI:33019"/>
        <dbReference type="ChEBI" id="CHEBI:37575"/>
        <dbReference type="ChEBI" id="CHEBI:57841"/>
        <dbReference type="ChEBI" id="CHEBI:58296"/>
        <dbReference type="EC" id="2.5.1.3"/>
    </reaction>
</comment>
<comment type="cofactor">
    <cofactor evidence="1">
        <name>Mg(2+)</name>
        <dbReference type="ChEBI" id="CHEBI:18420"/>
    </cofactor>
    <text evidence="1">Binds 1 Mg(2+) ion per subunit.</text>
</comment>
<comment type="pathway">
    <text evidence="1">Cofactor biosynthesis; thiamine diphosphate biosynthesis; thiamine phosphate from 4-amino-2-methyl-5-diphosphomethylpyrimidine and 4-methyl-5-(2-phosphoethyl)-thiazole: step 1/1.</text>
</comment>
<comment type="similarity">
    <text evidence="1">Belongs to the thiamine-phosphate synthase family.</text>
</comment>
<organism>
    <name type="scientific">Escherichia coli (strain SE11)</name>
    <dbReference type="NCBI Taxonomy" id="409438"/>
    <lineage>
        <taxon>Bacteria</taxon>
        <taxon>Pseudomonadati</taxon>
        <taxon>Pseudomonadota</taxon>
        <taxon>Gammaproteobacteria</taxon>
        <taxon>Enterobacterales</taxon>
        <taxon>Enterobacteriaceae</taxon>
        <taxon>Escherichia</taxon>
    </lineage>
</organism>
<feature type="chain" id="PRO_1000093668" description="Thiamine-phosphate synthase">
    <location>
        <begin position="1"/>
        <end position="211"/>
    </location>
</feature>
<feature type="binding site" evidence="1">
    <location>
        <begin position="37"/>
        <end position="41"/>
    </location>
    <ligand>
        <name>4-amino-2-methyl-5-(diphosphooxymethyl)pyrimidine</name>
        <dbReference type="ChEBI" id="CHEBI:57841"/>
    </ligand>
</feature>
<feature type="binding site" evidence="1">
    <location>
        <position position="69"/>
    </location>
    <ligand>
        <name>4-amino-2-methyl-5-(diphosphooxymethyl)pyrimidine</name>
        <dbReference type="ChEBI" id="CHEBI:57841"/>
    </ligand>
</feature>
<feature type="binding site" evidence="1">
    <location>
        <position position="70"/>
    </location>
    <ligand>
        <name>Mg(2+)</name>
        <dbReference type="ChEBI" id="CHEBI:18420"/>
    </ligand>
</feature>
<feature type="binding site" evidence="1">
    <location>
        <position position="89"/>
    </location>
    <ligand>
        <name>Mg(2+)</name>
        <dbReference type="ChEBI" id="CHEBI:18420"/>
    </ligand>
</feature>
<feature type="binding site" evidence="1">
    <location>
        <position position="108"/>
    </location>
    <ligand>
        <name>4-amino-2-methyl-5-(diphosphooxymethyl)pyrimidine</name>
        <dbReference type="ChEBI" id="CHEBI:57841"/>
    </ligand>
</feature>
<feature type="binding site" evidence="1">
    <location>
        <begin position="134"/>
        <end position="136"/>
    </location>
    <ligand>
        <name>2-[(2R,5Z)-2-carboxy-4-methylthiazol-5(2H)-ylidene]ethyl phosphate</name>
        <dbReference type="ChEBI" id="CHEBI:62899"/>
    </ligand>
</feature>
<feature type="binding site" evidence="1">
    <location>
        <position position="137"/>
    </location>
    <ligand>
        <name>4-amino-2-methyl-5-(diphosphooxymethyl)pyrimidine</name>
        <dbReference type="ChEBI" id="CHEBI:57841"/>
    </ligand>
</feature>
<feature type="binding site" evidence="1">
    <location>
        <position position="166"/>
    </location>
    <ligand>
        <name>2-[(2R,5Z)-2-carboxy-4-methylthiazol-5(2H)-ylidene]ethyl phosphate</name>
        <dbReference type="ChEBI" id="CHEBI:62899"/>
    </ligand>
</feature>
<feature type="binding site" evidence="1">
    <location>
        <begin position="186"/>
        <end position="187"/>
    </location>
    <ligand>
        <name>2-[(2R,5Z)-2-carboxy-4-methylthiazol-5(2H)-ylidene]ethyl phosphate</name>
        <dbReference type="ChEBI" id="CHEBI:62899"/>
    </ligand>
</feature>